<feature type="chain" id="PRO_0000071534" description="Glycerate kinase">
    <location>
        <begin position="1"/>
        <end position="382"/>
    </location>
</feature>
<feature type="sequence conflict" description="In Ref. 1; BAA21580." evidence="1" ref="1">
    <original>D</original>
    <variation>N</variation>
    <location>
        <position position="193"/>
    </location>
</feature>
<organism>
    <name type="scientific">Bacillus subtilis (strain 168)</name>
    <dbReference type="NCBI Taxonomy" id="224308"/>
    <lineage>
        <taxon>Bacteria</taxon>
        <taxon>Bacillati</taxon>
        <taxon>Bacillota</taxon>
        <taxon>Bacilli</taxon>
        <taxon>Bacillales</taxon>
        <taxon>Bacillaceae</taxon>
        <taxon>Bacillus</taxon>
    </lineage>
</organism>
<sequence length="382" mass="39400">MKIIIAPDSFKESLSALEAAEAIERGFKSVFPGADYRKLPVADGGEGTVQSLVDATNGRIIEQVVTGPLGEPVRAFFGMMGDGRTAVIEMAAASGLHLVPVDKRNPLITTTRGTGELIGAALDAGAERLIIGIGGSATNDGGAGMIQALGGRLLDNSGSEIGPGGGALSQLASIDVSGLDSRLRNVKLEVACDVDNPLTGPKGATAVFGPQKGATADMLDVLDQNVSHFADMAEKALGSTFRDTEGAGAAGGLGWSLLTYLQADLKRGIDIVLEAVDFESIVQDADLVITGEGRIDSQTVHGKTPIGVAKAAKSYDVPVIGIAGSISRDSNAVYQHGIDALFSIVPGAVPLEDAFEHAAEYMERTARDIAASIKLAKTMFLI</sequence>
<evidence type="ECO:0000305" key="1"/>
<gene>
    <name type="primary">glxK</name>
    <name type="synonym">yxaA</name>
    <name type="ordered locus">BSU40040</name>
    <name type="ORF">S14A</name>
</gene>
<name>GLXK_BACSU</name>
<keyword id="KW-0067">ATP-binding</keyword>
<keyword id="KW-0418">Kinase</keyword>
<keyword id="KW-0547">Nucleotide-binding</keyword>
<keyword id="KW-1185">Reference proteome</keyword>
<keyword id="KW-0808">Transferase</keyword>
<reference key="1">
    <citation type="journal article" date="1995" name="DNA Res.">
        <title>Cloning and sequencing of a 36-kb region of the Bacillus subtilis genome between the gnt and iol operons.</title>
        <authorList>
            <person name="Yoshida K."/>
            <person name="Seki S."/>
            <person name="Fujimura M."/>
            <person name="Miwa Y."/>
            <person name="Fujita Y."/>
        </authorList>
    </citation>
    <scope>NUCLEOTIDE SEQUENCE [GENOMIC DNA]</scope>
    <source>
        <strain>168 / BGSC1A1</strain>
    </source>
</reference>
<reference key="2">
    <citation type="journal article" date="1997" name="Nature">
        <title>The complete genome sequence of the Gram-positive bacterium Bacillus subtilis.</title>
        <authorList>
            <person name="Kunst F."/>
            <person name="Ogasawara N."/>
            <person name="Moszer I."/>
            <person name="Albertini A.M."/>
            <person name="Alloni G."/>
            <person name="Azevedo V."/>
            <person name="Bertero M.G."/>
            <person name="Bessieres P."/>
            <person name="Bolotin A."/>
            <person name="Borchert S."/>
            <person name="Borriss R."/>
            <person name="Boursier L."/>
            <person name="Brans A."/>
            <person name="Braun M."/>
            <person name="Brignell S.C."/>
            <person name="Bron S."/>
            <person name="Brouillet S."/>
            <person name="Bruschi C.V."/>
            <person name="Caldwell B."/>
            <person name="Capuano V."/>
            <person name="Carter N.M."/>
            <person name="Choi S.-K."/>
            <person name="Codani J.-J."/>
            <person name="Connerton I.F."/>
            <person name="Cummings N.J."/>
            <person name="Daniel R.A."/>
            <person name="Denizot F."/>
            <person name="Devine K.M."/>
            <person name="Duesterhoeft A."/>
            <person name="Ehrlich S.D."/>
            <person name="Emmerson P.T."/>
            <person name="Entian K.-D."/>
            <person name="Errington J."/>
            <person name="Fabret C."/>
            <person name="Ferrari E."/>
            <person name="Foulger D."/>
            <person name="Fritz C."/>
            <person name="Fujita M."/>
            <person name="Fujita Y."/>
            <person name="Fuma S."/>
            <person name="Galizzi A."/>
            <person name="Galleron N."/>
            <person name="Ghim S.-Y."/>
            <person name="Glaser P."/>
            <person name="Goffeau A."/>
            <person name="Golightly E.J."/>
            <person name="Grandi G."/>
            <person name="Guiseppi G."/>
            <person name="Guy B.J."/>
            <person name="Haga K."/>
            <person name="Haiech J."/>
            <person name="Harwood C.R."/>
            <person name="Henaut A."/>
            <person name="Hilbert H."/>
            <person name="Holsappel S."/>
            <person name="Hosono S."/>
            <person name="Hullo M.-F."/>
            <person name="Itaya M."/>
            <person name="Jones L.-M."/>
            <person name="Joris B."/>
            <person name="Karamata D."/>
            <person name="Kasahara Y."/>
            <person name="Klaerr-Blanchard M."/>
            <person name="Klein C."/>
            <person name="Kobayashi Y."/>
            <person name="Koetter P."/>
            <person name="Koningstein G."/>
            <person name="Krogh S."/>
            <person name="Kumano M."/>
            <person name="Kurita K."/>
            <person name="Lapidus A."/>
            <person name="Lardinois S."/>
            <person name="Lauber J."/>
            <person name="Lazarevic V."/>
            <person name="Lee S.-M."/>
            <person name="Levine A."/>
            <person name="Liu H."/>
            <person name="Masuda S."/>
            <person name="Mauel C."/>
            <person name="Medigue C."/>
            <person name="Medina N."/>
            <person name="Mellado R.P."/>
            <person name="Mizuno M."/>
            <person name="Moestl D."/>
            <person name="Nakai S."/>
            <person name="Noback M."/>
            <person name="Noone D."/>
            <person name="O'Reilly M."/>
            <person name="Ogawa K."/>
            <person name="Ogiwara A."/>
            <person name="Oudega B."/>
            <person name="Park S.-H."/>
            <person name="Parro V."/>
            <person name="Pohl T.M."/>
            <person name="Portetelle D."/>
            <person name="Porwollik S."/>
            <person name="Prescott A.M."/>
            <person name="Presecan E."/>
            <person name="Pujic P."/>
            <person name="Purnelle B."/>
            <person name="Rapoport G."/>
            <person name="Rey M."/>
            <person name="Reynolds S."/>
            <person name="Rieger M."/>
            <person name="Rivolta C."/>
            <person name="Rocha E."/>
            <person name="Roche B."/>
            <person name="Rose M."/>
            <person name="Sadaie Y."/>
            <person name="Sato T."/>
            <person name="Scanlan E."/>
            <person name="Schleich S."/>
            <person name="Schroeter R."/>
            <person name="Scoffone F."/>
            <person name="Sekiguchi J."/>
            <person name="Sekowska A."/>
            <person name="Seror S.J."/>
            <person name="Serror P."/>
            <person name="Shin B.-S."/>
            <person name="Soldo B."/>
            <person name="Sorokin A."/>
            <person name="Tacconi E."/>
            <person name="Takagi T."/>
            <person name="Takahashi H."/>
            <person name="Takemaru K."/>
            <person name="Takeuchi M."/>
            <person name="Tamakoshi A."/>
            <person name="Tanaka T."/>
            <person name="Terpstra P."/>
            <person name="Tognoni A."/>
            <person name="Tosato V."/>
            <person name="Uchiyama S."/>
            <person name="Vandenbol M."/>
            <person name="Vannier F."/>
            <person name="Vassarotti A."/>
            <person name="Viari A."/>
            <person name="Wambutt R."/>
            <person name="Wedler E."/>
            <person name="Wedler H."/>
            <person name="Weitzenegger T."/>
            <person name="Winters P."/>
            <person name="Wipat A."/>
            <person name="Yamamoto H."/>
            <person name="Yamane K."/>
            <person name="Yasumoto K."/>
            <person name="Yata K."/>
            <person name="Yoshida K."/>
            <person name="Yoshikawa H.-F."/>
            <person name="Zumstein E."/>
            <person name="Yoshikawa H."/>
            <person name="Danchin A."/>
        </authorList>
    </citation>
    <scope>NUCLEOTIDE SEQUENCE [LARGE SCALE GENOMIC DNA]</scope>
    <source>
        <strain>168</strain>
    </source>
</reference>
<reference key="3">
    <citation type="journal article" date="2009" name="Microbiology">
        <title>From a consortium sequence to a unified sequence: the Bacillus subtilis 168 reference genome a decade later.</title>
        <authorList>
            <person name="Barbe V."/>
            <person name="Cruveiller S."/>
            <person name="Kunst F."/>
            <person name="Lenoble P."/>
            <person name="Meurice G."/>
            <person name="Sekowska A."/>
            <person name="Vallenet D."/>
            <person name="Wang T."/>
            <person name="Moszer I."/>
            <person name="Medigue C."/>
            <person name="Danchin A."/>
        </authorList>
    </citation>
    <scope>SEQUENCE REVISION TO 193</scope>
</reference>
<reference key="4">
    <citation type="journal article" date="1986" name="J. Biol. Chem.">
        <title>Organization and transcription of the gluconate operon, gnt, of Bacillus subtilis.</title>
        <authorList>
            <person name="Fujita Y."/>
            <person name="Fujita T."/>
            <person name="Miwa Y."/>
            <person name="Nihashi J."/>
            <person name="Aratani Y."/>
        </authorList>
    </citation>
    <scope>NUCLEOTIDE SEQUENCE [GENOMIC DNA] OF 1-13</scope>
</reference>
<comment type="catalytic activity">
    <reaction>
        <text>(R)-glycerate + ATP = (2R)-3-phosphoglycerate + ADP + H(+)</text>
        <dbReference type="Rhea" id="RHEA:23516"/>
        <dbReference type="ChEBI" id="CHEBI:15378"/>
        <dbReference type="ChEBI" id="CHEBI:16659"/>
        <dbReference type="ChEBI" id="CHEBI:30616"/>
        <dbReference type="ChEBI" id="CHEBI:58272"/>
        <dbReference type="ChEBI" id="CHEBI:456216"/>
        <dbReference type="EC" id="2.7.1.31"/>
    </reaction>
</comment>
<comment type="similarity">
    <text evidence="1">Belongs to the glycerate kinase type-1 family.</text>
</comment>
<protein>
    <recommendedName>
        <fullName>Glycerate kinase</fullName>
        <ecNumber>2.7.1.31</ecNumber>
    </recommendedName>
</protein>
<accession>P42100</accession>
<proteinExistence type="inferred from homology"/>
<dbReference type="EC" id="2.7.1.31"/>
<dbReference type="EMBL" id="AB005554">
    <property type="protein sequence ID" value="BAA21580.1"/>
    <property type="molecule type" value="Genomic_DNA"/>
</dbReference>
<dbReference type="EMBL" id="AL009126">
    <property type="protein sequence ID" value="CAB16041.2"/>
    <property type="molecule type" value="Genomic_DNA"/>
</dbReference>
<dbReference type="EMBL" id="J02584">
    <property type="status" value="NOT_ANNOTATED_CDS"/>
    <property type="molecule type" value="Genomic_DNA"/>
</dbReference>
<dbReference type="EMBL" id="X03510">
    <property type="status" value="NOT_ANNOTATED_CDS"/>
    <property type="molecule type" value="Genomic_DNA"/>
</dbReference>
<dbReference type="PIR" id="A70071">
    <property type="entry name" value="A70071"/>
</dbReference>
<dbReference type="RefSeq" id="NP_391884.2">
    <property type="nucleotide sequence ID" value="NC_000964.3"/>
</dbReference>
<dbReference type="RefSeq" id="WP_003242551.1">
    <property type="nucleotide sequence ID" value="NZ_OZ025638.1"/>
</dbReference>
<dbReference type="SMR" id="P42100"/>
<dbReference type="FunCoup" id="P42100">
    <property type="interactions" value="278"/>
</dbReference>
<dbReference type="STRING" id="224308.BSU40040"/>
<dbReference type="PaxDb" id="224308-BSU40040"/>
<dbReference type="EnsemblBacteria" id="CAB16041">
    <property type="protein sequence ID" value="CAB16041"/>
    <property type="gene ID" value="BSU_40040"/>
</dbReference>
<dbReference type="GeneID" id="937708"/>
<dbReference type="KEGG" id="bsu:BSU40040"/>
<dbReference type="PATRIC" id="fig|224308.179.peg.4331"/>
<dbReference type="eggNOG" id="COG1929">
    <property type="taxonomic scope" value="Bacteria"/>
</dbReference>
<dbReference type="InParanoid" id="P42100"/>
<dbReference type="OrthoDB" id="9774290at2"/>
<dbReference type="PhylomeDB" id="P42100"/>
<dbReference type="BioCyc" id="BSUB:BSU40040-MONOMER"/>
<dbReference type="Proteomes" id="UP000001570">
    <property type="component" value="Chromosome"/>
</dbReference>
<dbReference type="GO" id="GO:0005524">
    <property type="term" value="F:ATP binding"/>
    <property type="evidence" value="ECO:0007669"/>
    <property type="project" value="UniProtKB-KW"/>
</dbReference>
<dbReference type="GO" id="GO:0043798">
    <property type="term" value="F:glycerate 2-kinase activity"/>
    <property type="evidence" value="ECO:0000318"/>
    <property type="project" value="GO_Central"/>
</dbReference>
<dbReference type="GO" id="GO:0008887">
    <property type="term" value="F:glycerate kinase activity"/>
    <property type="evidence" value="ECO:0007669"/>
    <property type="project" value="UniProtKB-EC"/>
</dbReference>
<dbReference type="GO" id="GO:0031388">
    <property type="term" value="P:organic acid phosphorylation"/>
    <property type="evidence" value="ECO:0007669"/>
    <property type="project" value="InterPro"/>
</dbReference>
<dbReference type="Gene3D" id="3.40.50.10350">
    <property type="entry name" value="Glycerate kinase, domain 1"/>
    <property type="match status" value="1"/>
</dbReference>
<dbReference type="Gene3D" id="3.90.1510.10">
    <property type="entry name" value="Glycerate kinase, domain 2"/>
    <property type="match status" value="1"/>
</dbReference>
<dbReference type="InterPro" id="IPR018193">
    <property type="entry name" value="Glyc_kinase_flavodox-like_fold"/>
</dbReference>
<dbReference type="InterPro" id="IPR004381">
    <property type="entry name" value="Glycerate_kinase"/>
</dbReference>
<dbReference type="InterPro" id="IPR018197">
    <property type="entry name" value="Glycerate_kinase_RE-like"/>
</dbReference>
<dbReference type="InterPro" id="IPR036129">
    <property type="entry name" value="Glycerate_kinase_sf"/>
</dbReference>
<dbReference type="NCBIfam" id="TIGR00045">
    <property type="entry name" value="glycerate kinase"/>
    <property type="match status" value="1"/>
</dbReference>
<dbReference type="PANTHER" id="PTHR21599">
    <property type="entry name" value="GLYCERATE KINASE"/>
    <property type="match status" value="1"/>
</dbReference>
<dbReference type="PANTHER" id="PTHR21599:SF0">
    <property type="entry name" value="GLYCERATE KINASE"/>
    <property type="match status" value="1"/>
</dbReference>
<dbReference type="Pfam" id="PF02595">
    <property type="entry name" value="Gly_kinase"/>
    <property type="match status" value="1"/>
</dbReference>
<dbReference type="PIRSF" id="PIRSF006078">
    <property type="entry name" value="GlxK"/>
    <property type="match status" value="1"/>
</dbReference>
<dbReference type="SUPFAM" id="SSF110738">
    <property type="entry name" value="Glycerate kinase I"/>
    <property type="match status" value="1"/>
</dbReference>